<proteinExistence type="evidence at transcript level"/>
<reference key="1">
    <citation type="journal article" date="2005" name="Nature">
        <title>The map-based sequence of the rice genome.</title>
        <authorList>
            <consortium name="International rice genome sequencing project (IRGSP)"/>
        </authorList>
    </citation>
    <scope>NUCLEOTIDE SEQUENCE [LARGE SCALE GENOMIC DNA]</scope>
    <source>
        <strain>cv. Nipponbare</strain>
    </source>
</reference>
<reference key="2">
    <citation type="journal article" date="2008" name="Nucleic Acids Res.">
        <title>The rice annotation project database (RAP-DB): 2008 update.</title>
        <authorList>
            <consortium name="The rice annotation project (RAP)"/>
        </authorList>
    </citation>
    <scope>GENOME REANNOTATION</scope>
    <source>
        <strain>cv. Nipponbare</strain>
    </source>
</reference>
<reference key="3">
    <citation type="journal article" date="2013" name="Rice">
        <title>Improvement of the Oryza sativa Nipponbare reference genome using next generation sequence and optical map data.</title>
        <authorList>
            <person name="Kawahara Y."/>
            <person name="de la Bastide M."/>
            <person name="Hamilton J.P."/>
            <person name="Kanamori H."/>
            <person name="McCombie W.R."/>
            <person name="Ouyang S."/>
            <person name="Schwartz D.C."/>
            <person name="Tanaka T."/>
            <person name="Wu J."/>
            <person name="Zhou S."/>
            <person name="Childs K.L."/>
            <person name="Davidson R.M."/>
            <person name="Lin H."/>
            <person name="Quesada-Ocampo L."/>
            <person name="Vaillancourt B."/>
            <person name="Sakai H."/>
            <person name="Lee S.S."/>
            <person name="Kim J."/>
            <person name="Numa H."/>
            <person name="Itoh T."/>
            <person name="Buell C.R."/>
            <person name="Matsumoto T."/>
        </authorList>
    </citation>
    <scope>GENOME REANNOTATION</scope>
    <source>
        <strain>cv. Nipponbare</strain>
    </source>
</reference>
<reference key="4">
    <citation type="submission" date="2006-10" db="EMBL/GenBank/DDBJ databases">
        <title>Oryza sativa full length cDNA.</title>
        <authorList>
            <consortium name="The rice full-length cDNA consortium"/>
        </authorList>
    </citation>
    <scope>NUCLEOTIDE SEQUENCE [LARGE SCALE MRNA]</scope>
    <source>
        <strain>cv. Nipponbare</strain>
    </source>
</reference>
<reference key="5">
    <citation type="journal article" date="2005" name="J. Exp. Bot.">
        <title>A novel gene family in Arabidopsis encoding putative heptahelical transmembrane proteins homologous to human adiponectin receptors and progestin receptors.</title>
        <authorList>
            <person name="Hsieh M.H."/>
            <person name="Goodman H.M."/>
        </authorList>
    </citation>
    <scope>GENE FAMILY</scope>
</reference>
<keyword id="KW-0472">Membrane</keyword>
<keyword id="KW-1185">Reference proteome</keyword>
<keyword id="KW-0346">Stress response</keyword>
<keyword id="KW-0812">Transmembrane</keyword>
<keyword id="KW-1133">Transmembrane helix</keyword>
<gene>
    <name type="primary">ADIPOR1</name>
    <name type="ordered locus">Os06g0643700</name>
    <name type="ordered locus">LOC_Os06g43620</name>
    <name type="ORF">P0017B12.2</name>
    <name type="ORF">P0416A11.35</name>
</gene>
<comment type="function">
    <text evidence="1">May play a role in abiotic stress response.</text>
</comment>
<comment type="subcellular location">
    <subcellularLocation>
        <location evidence="4">Membrane</location>
        <topology evidence="4">Multi-pass membrane protein</topology>
    </subcellularLocation>
</comment>
<comment type="similarity">
    <text evidence="4">Belongs to the ADIPOR family.</text>
</comment>
<comment type="sequence caution" evidence="4">
    <conflict type="erroneous initiation">
        <sequence resource="EMBL-CDS" id="BAD37371"/>
    </conflict>
    <text>Truncated N-terminus.</text>
</comment>
<comment type="sequence caution" evidence="4">
    <conflict type="erroneous initiation">
        <sequence resource="EMBL-CDS" id="BAD37427"/>
    </conflict>
    <text>Truncated N-terminus.</text>
</comment>
<sequence>MGEEAAMATMESAYHDELAPAAAPAPAKGGGSKKKRKQQKREEKRKECRLVSYHELPDYMKENEFILDYYRSEWPILNALLSLFSWHNETINIWTHLLGFVLFFGLTVLHLGQYFPQVADLIGHLSWPISKVAENVSSNIGDVLSGAASFMQASPASSAGAMAAAWPVTAAAAATTRWPFFVFLAGAMFCLLSSAACHLLSCHSHRLNLFLIRLDYTGIAVMIVVSFFPPIYYIFQCEPRWQVVYLSAITAAGVATVYALMSPRLSAARYRAHRALLFVAMGLSGVVPAAHAVAVNWHEPRRNVTLAYEGAMAASYLAGTAFYLTRVPERWRPGMFDLCGHSHQIFHALVIAGALAHYAAAIVFIQARDEMGCPAP</sequence>
<feature type="chain" id="PRO_0000430052" description="Heptahelical transmembrane protein ADIPOR1">
    <location>
        <begin position="1"/>
        <end position="376"/>
    </location>
</feature>
<feature type="topological domain" description="Cytoplasmic" evidence="2">
    <location>
        <begin position="1"/>
        <end position="90"/>
    </location>
</feature>
<feature type="transmembrane region" description="Helical" evidence="2">
    <location>
        <begin position="91"/>
        <end position="111"/>
    </location>
</feature>
<feature type="topological domain" description="Extracellular" evidence="2">
    <location>
        <begin position="112"/>
        <end position="179"/>
    </location>
</feature>
<feature type="transmembrane region" description="Helical" evidence="2">
    <location>
        <begin position="180"/>
        <end position="200"/>
    </location>
</feature>
<feature type="topological domain" description="Cytoplasmic" evidence="2">
    <location>
        <begin position="201"/>
        <end position="216"/>
    </location>
</feature>
<feature type="transmembrane region" description="Helical" evidence="2">
    <location>
        <begin position="217"/>
        <end position="237"/>
    </location>
</feature>
<feature type="topological domain" description="Extracellular" evidence="2">
    <location>
        <begin position="238"/>
        <end position="240"/>
    </location>
</feature>
<feature type="transmembrane region" description="Helical" evidence="2">
    <location>
        <begin position="241"/>
        <end position="261"/>
    </location>
</feature>
<feature type="topological domain" description="Cytoplasmic" evidence="2">
    <location>
        <begin position="262"/>
        <end position="274"/>
    </location>
</feature>
<feature type="transmembrane region" description="Helical" evidence="2">
    <location>
        <begin position="275"/>
        <end position="295"/>
    </location>
</feature>
<feature type="topological domain" description="Extracellular" evidence="2">
    <location>
        <begin position="296"/>
        <end position="303"/>
    </location>
</feature>
<feature type="transmembrane region" description="Helical" evidence="2">
    <location>
        <begin position="304"/>
        <end position="324"/>
    </location>
</feature>
<feature type="topological domain" description="Cytoplasmic" evidence="2">
    <location>
        <begin position="325"/>
        <end position="344"/>
    </location>
</feature>
<feature type="transmembrane region" description="Helical" evidence="2">
    <location>
        <begin position="345"/>
        <end position="365"/>
    </location>
</feature>
<feature type="topological domain" description="Extracellular" evidence="2">
    <location>
        <begin position="366"/>
        <end position="376"/>
    </location>
</feature>
<feature type="region of interest" description="Disordered" evidence="3">
    <location>
        <begin position="20"/>
        <end position="46"/>
    </location>
</feature>
<accession>B7F9G7</accession>
<accession>A0A0N7KMH5</accession>
<accession>Q67WN9</accession>
<dbReference type="EMBL" id="AP003523">
    <property type="protein sequence ID" value="BAD37371.1"/>
    <property type="status" value="ALT_INIT"/>
    <property type="molecule type" value="Genomic_DNA"/>
</dbReference>
<dbReference type="EMBL" id="AP003568">
    <property type="protein sequence ID" value="BAD37427.1"/>
    <property type="status" value="ALT_INIT"/>
    <property type="molecule type" value="Genomic_DNA"/>
</dbReference>
<dbReference type="EMBL" id="AP008212">
    <property type="protein sequence ID" value="BAF20094.2"/>
    <property type="molecule type" value="Genomic_DNA"/>
</dbReference>
<dbReference type="EMBL" id="AP014962">
    <property type="protein sequence ID" value="BAS98833.1"/>
    <property type="molecule type" value="Genomic_DNA"/>
</dbReference>
<dbReference type="EMBL" id="AK242335">
    <property type="protein sequence ID" value="BAH01265.1"/>
    <property type="molecule type" value="mRNA"/>
</dbReference>
<dbReference type="RefSeq" id="XP_015640976.1">
    <property type="nucleotide sequence ID" value="XM_015785490.1"/>
</dbReference>
<dbReference type="SMR" id="B7F9G7"/>
<dbReference type="FunCoup" id="B7F9G7">
    <property type="interactions" value="1368"/>
</dbReference>
<dbReference type="STRING" id="39947.B7F9G7"/>
<dbReference type="PaxDb" id="39947-B7F9G7"/>
<dbReference type="EnsemblPlants" id="Os06t0643700-01">
    <property type="protein sequence ID" value="Os06t0643700-01"/>
    <property type="gene ID" value="Os06g0643700"/>
</dbReference>
<dbReference type="Gramene" id="Os06t0643700-01">
    <property type="protein sequence ID" value="Os06t0643700-01"/>
    <property type="gene ID" value="Os06g0643700"/>
</dbReference>
<dbReference type="KEGG" id="dosa:Os06g0643700"/>
<dbReference type="eggNOG" id="KOG0748">
    <property type="taxonomic scope" value="Eukaryota"/>
</dbReference>
<dbReference type="HOGENOM" id="CLU_023075_4_0_1"/>
<dbReference type="InParanoid" id="B7F9G7"/>
<dbReference type="OMA" id="IGNACDY"/>
<dbReference type="OrthoDB" id="529367at2759"/>
<dbReference type="Proteomes" id="UP000000763">
    <property type="component" value="Chromosome 6"/>
</dbReference>
<dbReference type="Proteomes" id="UP000059680">
    <property type="component" value="Chromosome 6"/>
</dbReference>
<dbReference type="GO" id="GO:0016020">
    <property type="term" value="C:membrane"/>
    <property type="evidence" value="ECO:0007669"/>
    <property type="project" value="UniProtKB-SubCell"/>
</dbReference>
<dbReference type="GO" id="GO:0038023">
    <property type="term" value="F:signaling receptor activity"/>
    <property type="evidence" value="ECO:0000318"/>
    <property type="project" value="GO_Central"/>
</dbReference>
<dbReference type="GO" id="GO:0009788">
    <property type="term" value="P:negative regulation of abscisic acid-activated signaling pathway"/>
    <property type="evidence" value="ECO:0007669"/>
    <property type="project" value="EnsemblPlants"/>
</dbReference>
<dbReference type="GO" id="GO:0009725">
    <property type="term" value="P:response to hormone"/>
    <property type="evidence" value="ECO:0000318"/>
    <property type="project" value="GO_Central"/>
</dbReference>
<dbReference type="GO" id="GO:0009651">
    <property type="term" value="P:response to salt stress"/>
    <property type="evidence" value="ECO:0007669"/>
    <property type="project" value="EnsemblPlants"/>
</dbReference>
<dbReference type="GO" id="GO:0009744">
    <property type="term" value="P:response to sucrose"/>
    <property type="evidence" value="ECO:0007669"/>
    <property type="project" value="EnsemblPlants"/>
</dbReference>
<dbReference type="InterPro" id="IPR004254">
    <property type="entry name" value="AdipoR/HlyIII-related"/>
</dbReference>
<dbReference type="PANTHER" id="PTHR20855">
    <property type="entry name" value="ADIPOR/PROGESTIN RECEPTOR-RELATED"/>
    <property type="match status" value="1"/>
</dbReference>
<dbReference type="PANTHER" id="PTHR20855:SF115">
    <property type="entry name" value="HEPTAHELICAL TRANSMEMBRANE PROTEIN 1"/>
    <property type="match status" value="1"/>
</dbReference>
<dbReference type="Pfam" id="PF03006">
    <property type="entry name" value="HlyIII"/>
    <property type="match status" value="1"/>
</dbReference>
<evidence type="ECO:0000250" key="1"/>
<evidence type="ECO:0000255" key="2"/>
<evidence type="ECO:0000256" key="3">
    <source>
        <dbReference type="SAM" id="MobiDB-lite"/>
    </source>
</evidence>
<evidence type="ECO:0000305" key="4"/>
<protein>
    <recommendedName>
        <fullName>Heptahelical transmembrane protein ADIPOR1</fullName>
    </recommendedName>
    <alternativeName>
        <fullName>PAQR family protein ADIPOR1</fullName>
    </alternativeName>
</protein>
<name>ADPO1_ORYSJ</name>
<organism>
    <name type="scientific">Oryza sativa subsp. japonica</name>
    <name type="common">Rice</name>
    <dbReference type="NCBI Taxonomy" id="39947"/>
    <lineage>
        <taxon>Eukaryota</taxon>
        <taxon>Viridiplantae</taxon>
        <taxon>Streptophyta</taxon>
        <taxon>Embryophyta</taxon>
        <taxon>Tracheophyta</taxon>
        <taxon>Spermatophyta</taxon>
        <taxon>Magnoliopsida</taxon>
        <taxon>Liliopsida</taxon>
        <taxon>Poales</taxon>
        <taxon>Poaceae</taxon>
        <taxon>BOP clade</taxon>
        <taxon>Oryzoideae</taxon>
        <taxon>Oryzeae</taxon>
        <taxon>Oryzinae</taxon>
        <taxon>Oryza</taxon>
        <taxon>Oryza sativa</taxon>
    </lineage>
</organism>